<organism>
    <name type="scientific">Homo sapiens</name>
    <name type="common">Human</name>
    <dbReference type="NCBI Taxonomy" id="9606"/>
    <lineage>
        <taxon>Eukaryota</taxon>
        <taxon>Metazoa</taxon>
        <taxon>Chordata</taxon>
        <taxon>Craniata</taxon>
        <taxon>Vertebrata</taxon>
        <taxon>Euteleostomi</taxon>
        <taxon>Mammalia</taxon>
        <taxon>Eutheria</taxon>
        <taxon>Euarchontoglires</taxon>
        <taxon>Primates</taxon>
        <taxon>Haplorrhini</taxon>
        <taxon>Catarrhini</taxon>
        <taxon>Hominidae</taxon>
        <taxon>Homo</taxon>
    </lineage>
</organism>
<feature type="chain" id="PRO_0000322538" description="Testis-expressed protein 38">
    <location>
        <begin position="1"/>
        <end position="206"/>
    </location>
</feature>
<feature type="transmembrane region" description="Helical" evidence="1">
    <location>
        <begin position="15"/>
        <end position="35"/>
    </location>
</feature>
<feature type="sequence variant" id="VAR_039405" description="In dbSNP:rs614486." evidence="2">
    <original>D</original>
    <variation>E</variation>
    <location>
        <position position="104"/>
    </location>
</feature>
<feature type="sequence variant" id="VAR_039406" description="In dbSNP:rs1025806." evidence="2">
    <original>A</original>
    <variation>V</variation>
    <location>
        <position position="199"/>
    </location>
</feature>
<accession>Q6PEX7</accession>
<accession>A1A4F8</accession>
<protein>
    <recommendedName>
        <fullName>Testis-expressed protein 38</fullName>
    </recommendedName>
    <alternativeName>
        <fullName>ATPAF1 antisense RNA 1</fullName>
    </alternativeName>
    <alternativeName>
        <fullName>ATPAF1 antisense gene protein 1</fullName>
    </alternativeName>
</protein>
<keyword id="KW-0472">Membrane</keyword>
<keyword id="KW-1267">Proteomics identification</keyword>
<keyword id="KW-1185">Reference proteome</keyword>
<keyword id="KW-0812">Transmembrane</keyword>
<keyword id="KW-1133">Transmembrane helix</keyword>
<sequence length="206" mass="23280">MDSQQEDLRFPGMWVSLYFGILGLCSVITGGCIIFLHWRKNLRREEHAQQWVEVMRAATFTYSPLLYWINKRRRYGMNAAINTGPAPAVTKTETEVQNPDVLWDLDIPEGRSHADQDSNPKAEAPAPLQPALQLAPQQPQARSPFPLPIFQEVPFAPPLCNLPPLLNHSVSYPLATCPERNVLFHSLLNLAQEDHSFNAKPFPSEL</sequence>
<name>TEX38_HUMAN</name>
<evidence type="ECO:0000255" key="1"/>
<evidence type="ECO:0000269" key="2">
    <source>
    </source>
</evidence>
<evidence type="ECO:0000305" key="3"/>
<gene>
    <name type="primary">TEX38</name>
    <name type="synonym">ATPAF1-AS1</name>
    <name type="synonym">C1orf223</name>
</gene>
<proteinExistence type="evidence at protein level"/>
<comment type="subcellular location">
    <subcellularLocation>
        <location evidence="3">Membrane</location>
        <topology evidence="3">Single-pass membrane protein</topology>
    </subcellularLocation>
</comment>
<comment type="sequence caution" evidence="3">
    <conflict type="erroneous initiation">
        <sequence resource="EMBL-CDS" id="AAH57818"/>
    </conflict>
    <text>Extended N-terminus.</text>
</comment>
<comment type="sequence caution" evidence="3">
    <conflict type="erroneous initiation">
        <sequence resource="EMBL-CDS" id="AAI26319"/>
    </conflict>
    <text>Extended N-terminus.</text>
</comment>
<dbReference type="EMBL" id="AL593856">
    <property type="status" value="NOT_ANNOTATED_CDS"/>
    <property type="molecule type" value="Genomic_DNA"/>
</dbReference>
<dbReference type="EMBL" id="BC126318">
    <property type="protein sequence ID" value="AAI26319.1"/>
    <property type="status" value="ALT_INIT"/>
    <property type="molecule type" value="mRNA"/>
</dbReference>
<dbReference type="EMBL" id="BC057818">
    <property type="protein sequence ID" value="AAH57818.1"/>
    <property type="status" value="ALT_INIT"/>
    <property type="molecule type" value="mRNA"/>
</dbReference>
<dbReference type="CCDS" id="CCDS57999.1"/>
<dbReference type="RefSeq" id="NP_001138946.1">
    <property type="nucleotide sequence ID" value="NM_001145474.4"/>
</dbReference>
<dbReference type="FunCoup" id="Q6PEX7">
    <property type="interactions" value="3"/>
</dbReference>
<dbReference type="STRING" id="9606.ENSP00000455854"/>
<dbReference type="iPTMnet" id="Q6PEX7"/>
<dbReference type="PhosphoSitePlus" id="Q6PEX7"/>
<dbReference type="BioMuta" id="TEX38"/>
<dbReference type="DMDM" id="317373468"/>
<dbReference type="MassIVE" id="Q6PEX7"/>
<dbReference type="PaxDb" id="9606-ENSP00000455854"/>
<dbReference type="PeptideAtlas" id="Q6PEX7"/>
<dbReference type="ProteomicsDB" id="67086"/>
<dbReference type="Antibodypedia" id="66742">
    <property type="antibodies" value="18 antibodies from 9 providers"/>
</dbReference>
<dbReference type="DNASU" id="374973"/>
<dbReference type="Ensembl" id="ENST00000334122.5">
    <property type="protein sequence ID" value="ENSP00000455854.1"/>
    <property type="gene ID" value="ENSG00000186118.9"/>
</dbReference>
<dbReference type="GeneID" id="374973"/>
<dbReference type="KEGG" id="hsa:374973"/>
<dbReference type="MANE-Select" id="ENST00000334122.5">
    <property type="protein sequence ID" value="ENSP00000455854.1"/>
    <property type="RefSeq nucleotide sequence ID" value="NM_001145474.4"/>
    <property type="RefSeq protein sequence ID" value="NP_001138946.1"/>
</dbReference>
<dbReference type="UCSC" id="uc001cqj.4">
    <property type="organism name" value="human"/>
</dbReference>
<dbReference type="AGR" id="HGNC:29589"/>
<dbReference type="CTD" id="374973"/>
<dbReference type="GeneCards" id="TEX38"/>
<dbReference type="HGNC" id="HGNC:29589">
    <property type="gene designation" value="TEX38"/>
</dbReference>
<dbReference type="HPA" id="ENSG00000186118">
    <property type="expression patterns" value="Tissue enriched (testis)"/>
</dbReference>
<dbReference type="neXtProt" id="NX_Q6PEX7"/>
<dbReference type="OpenTargets" id="ENSG00000186118"/>
<dbReference type="PharmGKB" id="PA162378937"/>
<dbReference type="VEuPathDB" id="HostDB:ENSG00000186118"/>
<dbReference type="eggNOG" id="ENOG502SFNG">
    <property type="taxonomic scope" value="Eukaryota"/>
</dbReference>
<dbReference type="GeneTree" id="ENSGT00390000016446"/>
<dbReference type="HOGENOM" id="CLU_092826_0_0_1"/>
<dbReference type="InParanoid" id="Q6PEX7"/>
<dbReference type="OMA" id="HYGMNAA"/>
<dbReference type="OrthoDB" id="9439442at2759"/>
<dbReference type="PAN-GO" id="Q6PEX7">
    <property type="GO annotations" value="0 GO annotations based on evolutionary models"/>
</dbReference>
<dbReference type="PhylomeDB" id="Q6PEX7"/>
<dbReference type="PathwayCommons" id="Q6PEX7"/>
<dbReference type="BioGRID-ORCS" id="374973">
    <property type="hits" value="6 hits in 1135 CRISPR screens"/>
</dbReference>
<dbReference type="GenomeRNAi" id="374973"/>
<dbReference type="Pharos" id="Q6PEX7">
    <property type="development level" value="Tdark"/>
</dbReference>
<dbReference type="PRO" id="PR:Q6PEX7"/>
<dbReference type="Proteomes" id="UP000005640">
    <property type="component" value="Chromosome 1"/>
</dbReference>
<dbReference type="RNAct" id="Q6PEX7">
    <property type="molecule type" value="protein"/>
</dbReference>
<dbReference type="Bgee" id="ENSG00000186118">
    <property type="expression patterns" value="Expressed in left testis and 101 other cell types or tissues"/>
</dbReference>
<dbReference type="ExpressionAtlas" id="Q6PEX7">
    <property type="expression patterns" value="baseline and differential"/>
</dbReference>
<dbReference type="GO" id="GO:0016020">
    <property type="term" value="C:membrane"/>
    <property type="evidence" value="ECO:0007669"/>
    <property type="project" value="UniProtKB-SubCell"/>
</dbReference>
<dbReference type="InterPro" id="IPR031677">
    <property type="entry name" value="TEX38"/>
</dbReference>
<dbReference type="PANTHER" id="PTHR37362">
    <property type="entry name" value="TESTIS-EXPRESSED PROTEIN 38"/>
    <property type="match status" value="1"/>
</dbReference>
<dbReference type="PANTHER" id="PTHR37362:SF1">
    <property type="entry name" value="TESTIS-EXPRESSED PROTEIN 38"/>
    <property type="match status" value="1"/>
</dbReference>
<dbReference type="Pfam" id="PF15834">
    <property type="entry name" value="THEG4"/>
    <property type="match status" value="1"/>
</dbReference>
<reference key="1">
    <citation type="journal article" date="2006" name="Nature">
        <title>The DNA sequence and biological annotation of human chromosome 1.</title>
        <authorList>
            <person name="Gregory S.G."/>
            <person name="Barlow K.F."/>
            <person name="McLay K.E."/>
            <person name="Kaul R."/>
            <person name="Swarbreck D."/>
            <person name="Dunham A."/>
            <person name="Scott C.E."/>
            <person name="Howe K.L."/>
            <person name="Woodfine K."/>
            <person name="Spencer C.C.A."/>
            <person name="Jones M.C."/>
            <person name="Gillson C."/>
            <person name="Searle S."/>
            <person name="Zhou Y."/>
            <person name="Kokocinski F."/>
            <person name="McDonald L."/>
            <person name="Evans R."/>
            <person name="Phillips K."/>
            <person name="Atkinson A."/>
            <person name="Cooper R."/>
            <person name="Jones C."/>
            <person name="Hall R.E."/>
            <person name="Andrews T.D."/>
            <person name="Lloyd C."/>
            <person name="Ainscough R."/>
            <person name="Almeida J.P."/>
            <person name="Ambrose K.D."/>
            <person name="Anderson F."/>
            <person name="Andrew R.W."/>
            <person name="Ashwell R.I.S."/>
            <person name="Aubin K."/>
            <person name="Babbage A.K."/>
            <person name="Bagguley C.L."/>
            <person name="Bailey J."/>
            <person name="Beasley H."/>
            <person name="Bethel G."/>
            <person name="Bird C.P."/>
            <person name="Bray-Allen S."/>
            <person name="Brown J.Y."/>
            <person name="Brown A.J."/>
            <person name="Buckley D."/>
            <person name="Burton J."/>
            <person name="Bye J."/>
            <person name="Carder C."/>
            <person name="Chapman J.C."/>
            <person name="Clark S.Y."/>
            <person name="Clarke G."/>
            <person name="Clee C."/>
            <person name="Cobley V."/>
            <person name="Collier R.E."/>
            <person name="Corby N."/>
            <person name="Coville G.J."/>
            <person name="Davies J."/>
            <person name="Deadman R."/>
            <person name="Dunn M."/>
            <person name="Earthrowl M."/>
            <person name="Ellington A.G."/>
            <person name="Errington H."/>
            <person name="Frankish A."/>
            <person name="Frankland J."/>
            <person name="French L."/>
            <person name="Garner P."/>
            <person name="Garnett J."/>
            <person name="Gay L."/>
            <person name="Ghori M.R.J."/>
            <person name="Gibson R."/>
            <person name="Gilby L.M."/>
            <person name="Gillett W."/>
            <person name="Glithero R.J."/>
            <person name="Grafham D.V."/>
            <person name="Griffiths C."/>
            <person name="Griffiths-Jones S."/>
            <person name="Grocock R."/>
            <person name="Hammond S."/>
            <person name="Harrison E.S.I."/>
            <person name="Hart E."/>
            <person name="Haugen E."/>
            <person name="Heath P.D."/>
            <person name="Holmes S."/>
            <person name="Holt K."/>
            <person name="Howden P.J."/>
            <person name="Hunt A.R."/>
            <person name="Hunt S.E."/>
            <person name="Hunter G."/>
            <person name="Isherwood J."/>
            <person name="James R."/>
            <person name="Johnson C."/>
            <person name="Johnson D."/>
            <person name="Joy A."/>
            <person name="Kay M."/>
            <person name="Kershaw J.K."/>
            <person name="Kibukawa M."/>
            <person name="Kimberley A.M."/>
            <person name="King A."/>
            <person name="Knights A.J."/>
            <person name="Lad H."/>
            <person name="Laird G."/>
            <person name="Lawlor S."/>
            <person name="Leongamornlert D.A."/>
            <person name="Lloyd D.M."/>
            <person name="Loveland J."/>
            <person name="Lovell J."/>
            <person name="Lush M.J."/>
            <person name="Lyne R."/>
            <person name="Martin S."/>
            <person name="Mashreghi-Mohammadi M."/>
            <person name="Matthews L."/>
            <person name="Matthews N.S.W."/>
            <person name="McLaren S."/>
            <person name="Milne S."/>
            <person name="Mistry S."/>
            <person name="Moore M.J.F."/>
            <person name="Nickerson T."/>
            <person name="O'Dell C.N."/>
            <person name="Oliver K."/>
            <person name="Palmeiri A."/>
            <person name="Palmer S.A."/>
            <person name="Parker A."/>
            <person name="Patel D."/>
            <person name="Pearce A.V."/>
            <person name="Peck A.I."/>
            <person name="Pelan S."/>
            <person name="Phelps K."/>
            <person name="Phillimore B.J."/>
            <person name="Plumb R."/>
            <person name="Rajan J."/>
            <person name="Raymond C."/>
            <person name="Rouse G."/>
            <person name="Saenphimmachak C."/>
            <person name="Sehra H.K."/>
            <person name="Sheridan E."/>
            <person name="Shownkeen R."/>
            <person name="Sims S."/>
            <person name="Skuce C.D."/>
            <person name="Smith M."/>
            <person name="Steward C."/>
            <person name="Subramanian S."/>
            <person name="Sycamore N."/>
            <person name="Tracey A."/>
            <person name="Tromans A."/>
            <person name="Van Helmond Z."/>
            <person name="Wall M."/>
            <person name="Wallis J.M."/>
            <person name="White S."/>
            <person name="Whitehead S.L."/>
            <person name="Wilkinson J.E."/>
            <person name="Willey D.L."/>
            <person name="Williams H."/>
            <person name="Wilming L."/>
            <person name="Wray P.W."/>
            <person name="Wu Z."/>
            <person name="Coulson A."/>
            <person name="Vaudin M."/>
            <person name="Sulston J.E."/>
            <person name="Durbin R.M."/>
            <person name="Hubbard T."/>
            <person name="Wooster R."/>
            <person name="Dunham I."/>
            <person name="Carter N.P."/>
            <person name="McVean G."/>
            <person name="Ross M.T."/>
            <person name="Harrow J."/>
            <person name="Olson M.V."/>
            <person name="Beck S."/>
            <person name="Rogers J."/>
            <person name="Bentley D.R."/>
        </authorList>
    </citation>
    <scope>NUCLEOTIDE SEQUENCE [LARGE SCALE GENOMIC DNA]</scope>
</reference>
<reference key="2">
    <citation type="journal article" date="2004" name="Genome Res.">
        <title>The status, quality, and expansion of the NIH full-length cDNA project: the Mammalian Gene Collection (MGC).</title>
        <authorList>
            <consortium name="The MGC Project Team"/>
        </authorList>
    </citation>
    <scope>NUCLEOTIDE SEQUENCE [LARGE SCALE MRNA]</scope>
    <scope>VARIANTS GLU-104 AND VAL-199</scope>
    <source>
        <tissue>Testis</tissue>
    </source>
</reference>